<protein>
    <recommendedName>
        <fullName>TPR repeat-containing protein Synpcc7942_0270</fullName>
    </recommendedName>
</protein>
<feature type="chain" id="PRO_0000106447" description="TPR repeat-containing protein Synpcc7942_0270">
    <location>
        <begin position="1"/>
        <end position="403"/>
    </location>
</feature>
<feature type="repeat" description="TPR 1">
    <location>
        <begin position="208"/>
        <end position="243"/>
    </location>
</feature>
<feature type="repeat" description="TPR 2">
    <location>
        <begin position="244"/>
        <end position="282"/>
    </location>
</feature>
<feature type="repeat" description="TPR 3">
    <location>
        <begin position="283"/>
        <end position="316"/>
    </location>
</feature>
<feature type="repeat" description="TPR 4">
    <location>
        <begin position="317"/>
        <end position="350"/>
    </location>
</feature>
<feature type="repeat" description="TPR 5">
    <location>
        <begin position="351"/>
        <end position="387"/>
    </location>
</feature>
<reference key="1">
    <citation type="journal article" date="1994" name="Plant Mol. Biol.">
        <title>Cloning and characterisation of genes for tetrapyrrole biosynthesis from the cyanobacterium Anacystis nidulans R2.</title>
        <authorList>
            <person name="Jones M.C."/>
            <person name="Jenkins J.M."/>
            <person name="Smith A.G."/>
            <person name="Howe C.J."/>
        </authorList>
    </citation>
    <scope>NUCLEOTIDE SEQUENCE [GENOMIC DNA]</scope>
</reference>
<reference key="2">
    <citation type="submission" date="2005-08" db="EMBL/GenBank/DDBJ databases">
        <title>Complete sequence of chromosome 1 of Synechococcus elongatus PCC 7942.</title>
        <authorList>
            <consortium name="US DOE Joint Genome Institute"/>
            <person name="Copeland A."/>
            <person name="Lucas S."/>
            <person name="Lapidus A."/>
            <person name="Barry K."/>
            <person name="Detter J.C."/>
            <person name="Glavina T."/>
            <person name="Hammon N."/>
            <person name="Israni S."/>
            <person name="Pitluck S."/>
            <person name="Schmutz J."/>
            <person name="Larimer F."/>
            <person name="Land M."/>
            <person name="Kyrpides N."/>
            <person name="Lykidis A."/>
            <person name="Golden S."/>
            <person name="Richardson P."/>
        </authorList>
    </citation>
    <scope>NUCLEOTIDE SEQUENCE [LARGE SCALE GENOMIC DNA]</scope>
    <source>
        <strain>ATCC 33912 / PCC 7942 / FACHB-805</strain>
    </source>
</reference>
<proteinExistence type="predicted"/>
<comment type="caution">
    <text evidence="1">It is uncertain whether Met-1 or Met-14 is the initiator.</text>
</comment>
<comment type="sequence caution" evidence="1">
    <conflict type="erroneous initiation">
        <sequence resource="EMBL-CDS" id="ABB56302"/>
    </conflict>
</comment>
<dbReference type="EMBL" id="X70966">
    <property type="protein sequence ID" value="CAA50301.1"/>
    <property type="molecule type" value="Genomic_DNA"/>
</dbReference>
<dbReference type="EMBL" id="CP000100">
    <property type="protein sequence ID" value="ABB56302.1"/>
    <property type="status" value="ALT_INIT"/>
    <property type="molecule type" value="Genomic_DNA"/>
</dbReference>
<dbReference type="RefSeq" id="WP_011243555.1">
    <property type="nucleotide sequence ID" value="NZ_JACJTX010000002.1"/>
</dbReference>
<dbReference type="SMR" id="P42460"/>
<dbReference type="STRING" id="1140.Synpcc7942_0270"/>
<dbReference type="CAZy" id="GT2">
    <property type="family name" value="Glycosyltransferase Family 2"/>
</dbReference>
<dbReference type="PaxDb" id="1140-Synpcc7942_0270"/>
<dbReference type="KEGG" id="syf:Synpcc7942_0270"/>
<dbReference type="eggNOG" id="COG0457">
    <property type="taxonomic scope" value="Bacteria"/>
</dbReference>
<dbReference type="eggNOG" id="COG0463">
    <property type="taxonomic scope" value="Bacteria"/>
</dbReference>
<dbReference type="HOGENOM" id="CLU_023736_3_1_3"/>
<dbReference type="OrthoDB" id="9815923at2"/>
<dbReference type="BioCyc" id="SYNEL:SYNPCC7942_0270-MONOMER"/>
<dbReference type="Proteomes" id="UP000889800">
    <property type="component" value="Chromosome"/>
</dbReference>
<dbReference type="CDD" id="cd02511">
    <property type="entry name" value="Beta4Glucosyltransferase"/>
    <property type="match status" value="1"/>
</dbReference>
<dbReference type="Gene3D" id="3.90.550.10">
    <property type="entry name" value="Spore Coat Polysaccharide Biosynthesis Protein SpsA, Chain A"/>
    <property type="match status" value="1"/>
</dbReference>
<dbReference type="Gene3D" id="1.25.40.10">
    <property type="entry name" value="Tetratricopeptide repeat domain"/>
    <property type="match status" value="2"/>
</dbReference>
<dbReference type="InterPro" id="IPR001173">
    <property type="entry name" value="Glyco_trans_2-like"/>
</dbReference>
<dbReference type="InterPro" id="IPR029044">
    <property type="entry name" value="Nucleotide-diphossugar_trans"/>
</dbReference>
<dbReference type="InterPro" id="IPR011990">
    <property type="entry name" value="TPR-like_helical_dom_sf"/>
</dbReference>
<dbReference type="InterPro" id="IPR019734">
    <property type="entry name" value="TPR_rpt"/>
</dbReference>
<dbReference type="PANTHER" id="PTHR43630:SF2">
    <property type="entry name" value="GLYCOSYLTRANSFERASE"/>
    <property type="match status" value="1"/>
</dbReference>
<dbReference type="PANTHER" id="PTHR43630">
    <property type="entry name" value="POLY-BETA-1,6-N-ACETYL-D-GLUCOSAMINE SYNTHASE"/>
    <property type="match status" value="1"/>
</dbReference>
<dbReference type="Pfam" id="PF00535">
    <property type="entry name" value="Glycos_transf_2"/>
    <property type="match status" value="1"/>
</dbReference>
<dbReference type="Pfam" id="PF13414">
    <property type="entry name" value="TPR_11"/>
    <property type="match status" value="1"/>
</dbReference>
<dbReference type="Pfam" id="PF13432">
    <property type="entry name" value="TPR_16"/>
    <property type="match status" value="1"/>
</dbReference>
<dbReference type="Pfam" id="PF13181">
    <property type="entry name" value="TPR_8"/>
    <property type="match status" value="1"/>
</dbReference>
<dbReference type="SMART" id="SM00028">
    <property type="entry name" value="TPR"/>
    <property type="match status" value="4"/>
</dbReference>
<dbReference type="SUPFAM" id="SSF53448">
    <property type="entry name" value="Nucleotide-diphospho-sugar transferases"/>
    <property type="match status" value="1"/>
</dbReference>
<dbReference type="SUPFAM" id="SSF48452">
    <property type="entry name" value="TPR-like"/>
    <property type="match status" value="2"/>
</dbReference>
<dbReference type="PROSITE" id="PS50005">
    <property type="entry name" value="TPR"/>
    <property type="match status" value="4"/>
</dbReference>
<dbReference type="PROSITE" id="PS50293">
    <property type="entry name" value="TPR_REGION"/>
    <property type="match status" value="1"/>
</dbReference>
<name>Y270_SYNE7</name>
<accession>P42460</accession>
<accession>Q31RL7</accession>
<gene>
    <name type="ordered locus">Synpcc7942_0270</name>
</gene>
<keyword id="KW-1185">Reference proteome</keyword>
<keyword id="KW-0677">Repeat</keyword>
<keyword id="KW-0802">TPR repeat</keyword>
<evidence type="ECO:0000305" key="1"/>
<organism>
    <name type="scientific">Synechococcus elongatus (strain ATCC 33912 / PCC 7942 / FACHB-805)</name>
    <name type="common">Anacystis nidulans R2</name>
    <dbReference type="NCBI Taxonomy" id="1140"/>
    <lineage>
        <taxon>Bacteria</taxon>
        <taxon>Bacillati</taxon>
        <taxon>Cyanobacteriota</taxon>
        <taxon>Cyanophyceae</taxon>
        <taxon>Synechococcales</taxon>
        <taxon>Synechococcaceae</taxon>
        <taxon>Synechococcus</taxon>
    </lineage>
</organism>
<sequence>MFLGAAMAQVSLCMIVRDEAELLPRCLASVKDQVDELIVLDTGSRDRTPAIATEAGAKLLHTDWADDFSAARNQAIAAATGDWILVLDADEELILEAWTELRSQLDQPEALAFTVLREETQAGQVPYSRLSRLFRNRPDIRFQRPYHELVDDSLLALQQQEPNWRITAWPTPVIRHYGYGRDRLQQRGTAERMRQSLETWLADHPEDAYLCSKLGGLLVQEGDLKAAQRWLKQGLKQGRPEPAVRYELLYHLALLERRQGDLDAAIDRYQAALQEPVDAIHKLGAWVNLSHLYRDRGQLGLAYDAARQAVAAAPQATVALTALGLAARAIGNYPEAIAAYQQALQLDPNDPSLYQNLGAVLFQVGQLEASYAAFRQAIAGYEQQGSPEAQRLELRLQAMGIRL</sequence>